<organism>
    <name type="scientific">Vibrio cholerae serotype O1 (strain ATCC 39315 / El Tor Inaba N16961)</name>
    <dbReference type="NCBI Taxonomy" id="243277"/>
    <lineage>
        <taxon>Bacteria</taxon>
        <taxon>Pseudomonadati</taxon>
        <taxon>Pseudomonadota</taxon>
        <taxon>Gammaproteobacteria</taxon>
        <taxon>Vibrionales</taxon>
        <taxon>Vibrionaceae</taxon>
        <taxon>Vibrio</taxon>
    </lineage>
</organism>
<evidence type="ECO:0000255" key="1">
    <source>
        <dbReference type="HAMAP-Rule" id="MF_01062"/>
    </source>
</evidence>
<feature type="chain" id="PRO_0000196736" description="Putative phosphoenolpyruvate synthase regulatory protein">
    <location>
        <begin position="1"/>
        <end position="277"/>
    </location>
</feature>
<feature type="binding site" evidence="1">
    <location>
        <begin position="157"/>
        <end position="164"/>
    </location>
    <ligand>
        <name>ADP</name>
        <dbReference type="ChEBI" id="CHEBI:456216"/>
    </ligand>
</feature>
<dbReference type="EC" id="2.7.11.33" evidence="1"/>
<dbReference type="EC" id="2.7.4.28" evidence="1"/>
<dbReference type="EMBL" id="AE003853">
    <property type="protein sequence ID" value="AAF96882.1"/>
    <property type="molecule type" value="Genomic_DNA"/>
</dbReference>
<dbReference type="PIR" id="D82392">
    <property type="entry name" value="D82392"/>
</dbReference>
<dbReference type="RefSeq" id="NP_233370.1">
    <property type="nucleotide sequence ID" value="NC_002506.1"/>
</dbReference>
<dbReference type="RefSeq" id="WP_001177874.1">
    <property type="nucleotide sequence ID" value="NZ_LT906615.1"/>
</dbReference>
<dbReference type="SMR" id="Q9KKW4"/>
<dbReference type="STRING" id="243277.VC_A0986"/>
<dbReference type="DNASU" id="2612795"/>
<dbReference type="EnsemblBacteria" id="AAF96882">
    <property type="protein sequence ID" value="AAF96882"/>
    <property type="gene ID" value="VC_A0986"/>
</dbReference>
<dbReference type="KEGG" id="vch:VC_A0986"/>
<dbReference type="PATRIC" id="fig|243277.26.peg.3594"/>
<dbReference type="eggNOG" id="COG1806">
    <property type="taxonomic scope" value="Bacteria"/>
</dbReference>
<dbReference type="HOGENOM" id="CLU_046206_1_0_6"/>
<dbReference type="Proteomes" id="UP000000584">
    <property type="component" value="Chromosome 2"/>
</dbReference>
<dbReference type="GO" id="GO:0043531">
    <property type="term" value="F:ADP binding"/>
    <property type="evidence" value="ECO:0007669"/>
    <property type="project" value="UniProtKB-UniRule"/>
</dbReference>
<dbReference type="GO" id="GO:0005524">
    <property type="term" value="F:ATP binding"/>
    <property type="evidence" value="ECO:0007669"/>
    <property type="project" value="InterPro"/>
</dbReference>
<dbReference type="GO" id="GO:0016776">
    <property type="term" value="F:phosphotransferase activity, phosphate group as acceptor"/>
    <property type="evidence" value="ECO:0007669"/>
    <property type="project" value="UniProtKB-UniRule"/>
</dbReference>
<dbReference type="GO" id="GO:0004674">
    <property type="term" value="F:protein serine/threonine kinase activity"/>
    <property type="evidence" value="ECO:0007669"/>
    <property type="project" value="UniProtKB-UniRule"/>
</dbReference>
<dbReference type="HAMAP" id="MF_01062">
    <property type="entry name" value="PSRP"/>
    <property type="match status" value="1"/>
</dbReference>
<dbReference type="InterPro" id="IPR005177">
    <property type="entry name" value="Kinase-pyrophosphorylase"/>
</dbReference>
<dbReference type="InterPro" id="IPR026530">
    <property type="entry name" value="PSRP"/>
</dbReference>
<dbReference type="NCBIfam" id="NF003742">
    <property type="entry name" value="PRK05339.1"/>
    <property type="match status" value="1"/>
</dbReference>
<dbReference type="PANTHER" id="PTHR31756">
    <property type="entry name" value="PYRUVATE, PHOSPHATE DIKINASE REGULATORY PROTEIN 1, CHLOROPLASTIC"/>
    <property type="match status" value="1"/>
</dbReference>
<dbReference type="PANTHER" id="PTHR31756:SF3">
    <property type="entry name" value="PYRUVATE, PHOSPHATE DIKINASE REGULATORY PROTEIN 1, CHLOROPLASTIC"/>
    <property type="match status" value="1"/>
</dbReference>
<dbReference type="Pfam" id="PF03618">
    <property type="entry name" value="Kinase-PPPase"/>
    <property type="match status" value="1"/>
</dbReference>
<accession>Q9KKW4</accession>
<comment type="function">
    <text evidence="1">Bifunctional serine/threonine kinase and phosphorylase involved in the regulation of the phosphoenolpyruvate synthase (PEPS) by catalyzing its phosphorylation/dephosphorylation.</text>
</comment>
<comment type="catalytic activity">
    <reaction evidence="1">
        <text>[pyruvate, water dikinase] + ADP = [pyruvate, water dikinase]-phosphate + AMP + H(+)</text>
        <dbReference type="Rhea" id="RHEA:46020"/>
        <dbReference type="Rhea" id="RHEA-COMP:11425"/>
        <dbReference type="Rhea" id="RHEA-COMP:11426"/>
        <dbReference type="ChEBI" id="CHEBI:15378"/>
        <dbReference type="ChEBI" id="CHEBI:43176"/>
        <dbReference type="ChEBI" id="CHEBI:68546"/>
        <dbReference type="ChEBI" id="CHEBI:456215"/>
        <dbReference type="ChEBI" id="CHEBI:456216"/>
        <dbReference type="EC" id="2.7.11.33"/>
    </reaction>
</comment>
<comment type="catalytic activity">
    <reaction evidence="1">
        <text>[pyruvate, water dikinase]-phosphate + phosphate + H(+) = [pyruvate, water dikinase] + diphosphate</text>
        <dbReference type="Rhea" id="RHEA:48580"/>
        <dbReference type="Rhea" id="RHEA-COMP:11425"/>
        <dbReference type="Rhea" id="RHEA-COMP:11426"/>
        <dbReference type="ChEBI" id="CHEBI:15378"/>
        <dbReference type="ChEBI" id="CHEBI:33019"/>
        <dbReference type="ChEBI" id="CHEBI:43176"/>
        <dbReference type="ChEBI" id="CHEBI:43474"/>
        <dbReference type="ChEBI" id="CHEBI:68546"/>
        <dbReference type="EC" id="2.7.4.28"/>
    </reaction>
</comment>
<comment type="similarity">
    <text evidence="1">Belongs to the pyruvate, phosphate/water dikinase regulatory protein family. PSRP subfamily.</text>
</comment>
<protein>
    <recommendedName>
        <fullName evidence="1">Putative phosphoenolpyruvate synthase regulatory protein</fullName>
        <shortName evidence="1">PEP synthase regulatory protein</shortName>
        <shortName evidence="1">PSRP</shortName>
        <ecNumber evidence="1">2.7.11.33</ecNumber>
        <ecNumber evidence="1">2.7.4.28</ecNumber>
    </recommendedName>
    <alternativeName>
        <fullName evidence="1">Pyruvate, water dikinase regulatory protein</fullName>
    </alternativeName>
</protein>
<keyword id="KW-0418">Kinase</keyword>
<keyword id="KW-0547">Nucleotide-binding</keyword>
<keyword id="KW-1185">Reference proteome</keyword>
<keyword id="KW-0723">Serine/threonine-protein kinase</keyword>
<keyword id="KW-0808">Transferase</keyword>
<proteinExistence type="inferred from homology"/>
<sequence>MQMESQRRDVFYVSDGTAITCETLGHVVLGQFAVQPNEKTFPFVESDEKLSELLKQIQRSYQLHGVKPLVFFSMVIPEMRTRLLQAPAHFYDVLESIVQRVSLDIEMEPAPKLQRSRSVGKDSDTYFDRIAAIEYTLAHDDGVSLKDLDRADIILLGVSRSGKTPTSLYMAMQFGLRVVNYPFIAEDMHAMRLLPEFEFHRHKLFGLTINAERLTEIRENRLAGSEYASNQQCQQELATVEALFRREAISYINTSSLSVEEISTRILERTGLKRRLF</sequence>
<name>PSRP_VIBCH</name>
<gene>
    <name type="ordered locus">VC_A0986</name>
</gene>
<reference key="1">
    <citation type="journal article" date="2000" name="Nature">
        <title>DNA sequence of both chromosomes of the cholera pathogen Vibrio cholerae.</title>
        <authorList>
            <person name="Heidelberg J.F."/>
            <person name="Eisen J.A."/>
            <person name="Nelson W.C."/>
            <person name="Clayton R.A."/>
            <person name="Gwinn M.L."/>
            <person name="Dodson R.J."/>
            <person name="Haft D.H."/>
            <person name="Hickey E.K."/>
            <person name="Peterson J.D."/>
            <person name="Umayam L.A."/>
            <person name="Gill S.R."/>
            <person name="Nelson K.E."/>
            <person name="Read T.D."/>
            <person name="Tettelin H."/>
            <person name="Richardson D.L."/>
            <person name="Ermolaeva M.D."/>
            <person name="Vamathevan J.J."/>
            <person name="Bass S."/>
            <person name="Qin H."/>
            <person name="Dragoi I."/>
            <person name="Sellers P."/>
            <person name="McDonald L.A."/>
            <person name="Utterback T.R."/>
            <person name="Fleischmann R.D."/>
            <person name="Nierman W.C."/>
            <person name="White O."/>
            <person name="Salzberg S.L."/>
            <person name="Smith H.O."/>
            <person name="Colwell R.R."/>
            <person name="Mekalanos J.J."/>
            <person name="Venter J.C."/>
            <person name="Fraser C.M."/>
        </authorList>
    </citation>
    <scope>NUCLEOTIDE SEQUENCE [LARGE SCALE GENOMIC DNA]</scope>
    <source>
        <strain>ATCC 39315 / El Tor Inaba N16961</strain>
    </source>
</reference>